<sequence length="337" mass="36387">MDLQEAAMEARNGHRIPPTEEKVIIDTDPGIDDSVAIMMAFEAPGVKVVGLTTIFGNCTTSHATRNALILCDRAGRPEVPVAEGSAEPLKGGKPHVADFVHGSDGLGNTSFPDPTTTNKVEQSAAEFLVDKVSESPGEISVLALGPLTNIALAMKKDSSFASKVKRIVVLGGAFFAAGNATPSAEANIHSDPEAADIVFTSGADIYVVGLNITTQVYFTDKDMLELRNSKGKHAQFLCDICKFYRDWHVHSYGVDALFLHDPVSFTALVHPEYFTFKKGVVRVETQGICKGHTSMDMGLKKWNSDNPWTGYSPISVAWTVDVPKVLAYAKELLFNAQ</sequence>
<comment type="function">
    <text evidence="1">Involved in pyrimidine breakdown.</text>
</comment>
<comment type="catalytic activity">
    <reaction>
        <text>uridine + H2O = D-ribose + uracil</text>
        <dbReference type="Rhea" id="RHEA:15577"/>
        <dbReference type="ChEBI" id="CHEBI:15377"/>
        <dbReference type="ChEBI" id="CHEBI:16704"/>
        <dbReference type="ChEBI" id="CHEBI:17568"/>
        <dbReference type="ChEBI" id="CHEBI:47013"/>
        <dbReference type="EC" id="3.2.2.3"/>
    </reaction>
</comment>
<comment type="subcellular location">
    <subcellularLocation>
        <location evidence="1">Cytoplasm</location>
    </subcellularLocation>
</comment>
<comment type="similarity">
    <text evidence="2">Belongs to the IUNH family.</text>
</comment>
<evidence type="ECO:0000250" key="1"/>
<evidence type="ECO:0000305" key="2"/>
<feature type="chain" id="PRO_0000394505" description="Probable uridine nucleosidase 2">
    <location>
        <begin position="1"/>
        <end position="337"/>
    </location>
</feature>
<feature type="active site" evidence="1">
    <location>
        <position position="260"/>
    </location>
</feature>
<keyword id="KW-0963">Cytoplasm</keyword>
<keyword id="KW-0326">Glycosidase</keyword>
<keyword id="KW-0378">Hydrolase</keyword>
<keyword id="KW-1185">Reference proteome</keyword>
<reference key="1">
    <citation type="journal article" date="2005" name="Nature">
        <title>The map-based sequence of the rice genome.</title>
        <authorList>
            <consortium name="International rice genome sequencing project (IRGSP)"/>
        </authorList>
    </citation>
    <scope>NUCLEOTIDE SEQUENCE [LARGE SCALE GENOMIC DNA]</scope>
    <source>
        <strain>cv. Nipponbare</strain>
    </source>
</reference>
<reference key="2">
    <citation type="journal article" date="2008" name="Nucleic Acids Res.">
        <title>The rice annotation project database (RAP-DB): 2008 update.</title>
        <authorList>
            <consortium name="The rice annotation project (RAP)"/>
        </authorList>
    </citation>
    <scope>GENOME REANNOTATION</scope>
    <source>
        <strain>cv. Nipponbare</strain>
    </source>
</reference>
<reference key="3">
    <citation type="journal article" date="2013" name="Rice">
        <title>Improvement of the Oryza sativa Nipponbare reference genome using next generation sequence and optical map data.</title>
        <authorList>
            <person name="Kawahara Y."/>
            <person name="de la Bastide M."/>
            <person name="Hamilton J.P."/>
            <person name="Kanamori H."/>
            <person name="McCombie W.R."/>
            <person name="Ouyang S."/>
            <person name="Schwartz D.C."/>
            <person name="Tanaka T."/>
            <person name="Wu J."/>
            <person name="Zhou S."/>
            <person name="Childs K.L."/>
            <person name="Davidson R.M."/>
            <person name="Lin H."/>
            <person name="Quesada-Ocampo L."/>
            <person name="Vaillancourt B."/>
            <person name="Sakai H."/>
            <person name="Lee S.S."/>
            <person name="Kim J."/>
            <person name="Numa H."/>
            <person name="Itoh T."/>
            <person name="Buell C.R."/>
            <person name="Matsumoto T."/>
        </authorList>
    </citation>
    <scope>GENOME REANNOTATION</scope>
    <source>
        <strain>cv. Nipponbare</strain>
    </source>
</reference>
<reference key="4">
    <citation type="journal article" date="2005" name="PLoS Biol.">
        <title>The genomes of Oryza sativa: a history of duplications.</title>
        <authorList>
            <person name="Yu J."/>
            <person name="Wang J."/>
            <person name="Lin W."/>
            <person name="Li S."/>
            <person name="Li H."/>
            <person name="Zhou J."/>
            <person name="Ni P."/>
            <person name="Dong W."/>
            <person name="Hu S."/>
            <person name="Zeng C."/>
            <person name="Zhang J."/>
            <person name="Zhang Y."/>
            <person name="Li R."/>
            <person name="Xu Z."/>
            <person name="Li S."/>
            <person name="Li X."/>
            <person name="Zheng H."/>
            <person name="Cong L."/>
            <person name="Lin L."/>
            <person name="Yin J."/>
            <person name="Geng J."/>
            <person name="Li G."/>
            <person name="Shi J."/>
            <person name="Liu J."/>
            <person name="Lv H."/>
            <person name="Li J."/>
            <person name="Wang J."/>
            <person name="Deng Y."/>
            <person name="Ran L."/>
            <person name="Shi X."/>
            <person name="Wang X."/>
            <person name="Wu Q."/>
            <person name="Li C."/>
            <person name="Ren X."/>
            <person name="Wang J."/>
            <person name="Wang X."/>
            <person name="Li D."/>
            <person name="Liu D."/>
            <person name="Zhang X."/>
            <person name="Ji Z."/>
            <person name="Zhao W."/>
            <person name="Sun Y."/>
            <person name="Zhang Z."/>
            <person name="Bao J."/>
            <person name="Han Y."/>
            <person name="Dong L."/>
            <person name="Ji J."/>
            <person name="Chen P."/>
            <person name="Wu S."/>
            <person name="Liu J."/>
            <person name="Xiao Y."/>
            <person name="Bu D."/>
            <person name="Tan J."/>
            <person name="Yang L."/>
            <person name="Ye C."/>
            <person name="Zhang J."/>
            <person name="Xu J."/>
            <person name="Zhou Y."/>
            <person name="Yu Y."/>
            <person name="Zhang B."/>
            <person name="Zhuang S."/>
            <person name="Wei H."/>
            <person name="Liu B."/>
            <person name="Lei M."/>
            <person name="Yu H."/>
            <person name="Li Y."/>
            <person name="Xu H."/>
            <person name="Wei S."/>
            <person name="He X."/>
            <person name="Fang L."/>
            <person name="Zhang Z."/>
            <person name="Zhang Y."/>
            <person name="Huang X."/>
            <person name="Su Z."/>
            <person name="Tong W."/>
            <person name="Li J."/>
            <person name="Tong Z."/>
            <person name="Li S."/>
            <person name="Ye J."/>
            <person name="Wang L."/>
            <person name="Fang L."/>
            <person name="Lei T."/>
            <person name="Chen C.-S."/>
            <person name="Chen H.-C."/>
            <person name="Xu Z."/>
            <person name="Li H."/>
            <person name="Huang H."/>
            <person name="Zhang F."/>
            <person name="Xu H."/>
            <person name="Li N."/>
            <person name="Zhao C."/>
            <person name="Li S."/>
            <person name="Dong L."/>
            <person name="Huang Y."/>
            <person name="Li L."/>
            <person name="Xi Y."/>
            <person name="Qi Q."/>
            <person name="Li W."/>
            <person name="Zhang B."/>
            <person name="Hu W."/>
            <person name="Zhang Y."/>
            <person name="Tian X."/>
            <person name="Jiao Y."/>
            <person name="Liang X."/>
            <person name="Jin J."/>
            <person name="Gao L."/>
            <person name="Zheng W."/>
            <person name="Hao B."/>
            <person name="Liu S.-M."/>
            <person name="Wang W."/>
            <person name="Yuan L."/>
            <person name="Cao M."/>
            <person name="McDermott J."/>
            <person name="Samudrala R."/>
            <person name="Wang J."/>
            <person name="Wong G.K.-S."/>
            <person name="Yang H."/>
        </authorList>
    </citation>
    <scope>NUCLEOTIDE SEQUENCE [LARGE SCALE GENOMIC DNA]</scope>
    <source>
        <strain>cv. Nipponbare</strain>
    </source>
</reference>
<reference key="5">
    <citation type="journal article" date="2003" name="Science">
        <title>Collection, mapping, and annotation of over 28,000 cDNA clones from japonica rice.</title>
        <authorList>
            <consortium name="The rice full-length cDNA consortium"/>
        </authorList>
    </citation>
    <scope>NUCLEOTIDE SEQUENCE [LARGE SCALE MRNA]</scope>
    <source>
        <strain>cv. Nipponbare</strain>
    </source>
</reference>
<name>URH2_ORYSJ</name>
<gene>
    <name type="primary">URH2</name>
    <name type="ordered locus">Os09g0567900</name>
    <name type="ordered locus">LOC_Os09g39440</name>
    <name type="ORF">OJ1003_C09.5</name>
    <name type="ORF">OsJ_30393</name>
</gene>
<dbReference type="EC" id="3.2.2.3"/>
<dbReference type="EMBL" id="AP005546">
    <property type="protein sequence ID" value="BAD46209.1"/>
    <property type="molecule type" value="Genomic_DNA"/>
</dbReference>
<dbReference type="EMBL" id="AP008215">
    <property type="protein sequence ID" value="BAF25880.1"/>
    <property type="molecule type" value="Genomic_DNA"/>
</dbReference>
<dbReference type="EMBL" id="AP014965">
    <property type="protein sequence ID" value="BAT09481.1"/>
    <property type="molecule type" value="Genomic_DNA"/>
</dbReference>
<dbReference type="EMBL" id="CM000146">
    <property type="protein sequence ID" value="EEE70259.1"/>
    <property type="molecule type" value="Genomic_DNA"/>
</dbReference>
<dbReference type="EMBL" id="AK061415">
    <property type="protein sequence ID" value="BAG87909.1"/>
    <property type="molecule type" value="mRNA"/>
</dbReference>
<dbReference type="RefSeq" id="XP_015610747.1">
    <property type="nucleotide sequence ID" value="XM_015755261.1"/>
</dbReference>
<dbReference type="SMR" id="Q652Q8"/>
<dbReference type="FunCoup" id="Q652Q8">
    <property type="interactions" value="872"/>
</dbReference>
<dbReference type="STRING" id="39947.Q652Q8"/>
<dbReference type="PaxDb" id="39947-Q652Q8"/>
<dbReference type="EnsemblPlants" id="Os09t0567900-01">
    <property type="protein sequence ID" value="Os09t0567900-01"/>
    <property type="gene ID" value="Os09g0567900"/>
</dbReference>
<dbReference type="Gramene" id="Os09t0567900-01">
    <property type="protein sequence ID" value="Os09t0567900-01"/>
    <property type="gene ID" value="Os09g0567900"/>
</dbReference>
<dbReference type="KEGG" id="dosa:Os09g0567900"/>
<dbReference type="eggNOG" id="KOG2938">
    <property type="taxonomic scope" value="Eukaryota"/>
</dbReference>
<dbReference type="HOGENOM" id="CLU_036838_2_1_1"/>
<dbReference type="InParanoid" id="Q652Q8"/>
<dbReference type="OMA" id="PNIKPFC"/>
<dbReference type="OrthoDB" id="432381at2759"/>
<dbReference type="Proteomes" id="UP000000763">
    <property type="component" value="Chromosome 9"/>
</dbReference>
<dbReference type="Proteomes" id="UP000007752">
    <property type="component" value="Chromosome 9"/>
</dbReference>
<dbReference type="Proteomes" id="UP000059680">
    <property type="component" value="Chromosome 9"/>
</dbReference>
<dbReference type="GO" id="GO:0005829">
    <property type="term" value="C:cytosol"/>
    <property type="evidence" value="ECO:0000318"/>
    <property type="project" value="GO_Central"/>
</dbReference>
<dbReference type="GO" id="GO:0008477">
    <property type="term" value="F:purine nucleosidase activity"/>
    <property type="evidence" value="ECO:0000318"/>
    <property type="project" value="GO_Central"/>
</dbReference>
<dbReference type="GO" id="GO:0045437">
    <property type="term" value="F:uridine nucleosidase activity"/>
    <property type="evidence" value="ECO:0007669"/>
    <property type="project" value="UniProtKB-EC"/>
</dbReference>
<dbReference type="GO" id="GO:0006152">
    <property type="term" value="P:purine nucleoside catabolic process"/>
    <property type="evidence" value="ECO:0000318"/>
    <property type="project" value="GO_Central"/>
</dbReference>
<dbReference type="CDD" id="cd02650">
    <property type="entry name" value="nuc_hydro_CaPnhB"/>
    <property type="match status" value="1"/>
</dbReference>
<dbReference type="FunFam" id="3.90.245.10:FF:000004">
    <property type="entry name" value="Probable uridine nucleosidase 1"/>
    <property type="match status" value="1"/>
</dbReference>
<dbReference type="Gene3D" id="3.90.245.10">
    <property type="entry name" value="Ribonucleoside hydrolase-like"/>
    <property type="match status" value="1"/>
</dbReference>
<dbReference type="InterPro" id="IPR001910">
    <property type="entry name" value="Inosine/uridine_hydrolase_dom"/>
</dbReference>
<dbReference type="InterPro" id="IPR023186">
    <property type="entry name" value="IUNH"/>
</dbReference>
<dbReference type="InterPro" id="IPR036452">
    <property type="entry name" value="Ribo_hydro-like"/>
</dbReference>
<dbReference type="PANTHER" id="PTHR12304">
    <property type="entry name" value="INOSINE-URIDINE PREFERRING NUCLEOSIDE HYDROLASE"/>
    <property type="match status" value="1"/>
</dbReference>
<dbReference type="PANTHER" id="PTHR12304:SF21">
    <property type="entry name" value="URIDINE NUCLEOSIDASE 2-RELATED"/>
    <property type="match status" value="1"/>
</dbReference>
<dbReference type="Pfam" id="PF01156">
    <property type="entry name" value="IU_nuc_hydro"/>
    <property type="match status" value="1"/>
</dbReference>
<dbReference type="SUPFAM" id="SSF53590">
    <property type="entry name" value="Nucleoside hydrolase"/>
    <property type="match status" value="1"/>
</dbReference>
<proteinExistence type="evidence at transcript level"/>
<accession>Q652Q8</accession>
<accession>A0A0P0XRD8</accession>
<organism>
    <name type="scientific">Oryza sativa subsp. japonica</name>
    <name type="common">Rice</name>
    <dbReference type="NCBI Taxonomy" id="39947"/>
    <lineage>
        <taxon>Eukaryota</taxon>
        <taxon>Viridiplantae</taxon>
        <taxon>Streptophyta</taxon>
        <taxon>Embryophyta</taxon>
        <taxon>Tracheophyta</taxon>
        <taxon>Spermatophyta</taxon>
        <taxon>Magnoliopsida</taxon>
        <taxon>Liliopsida</taxon>
        <taxon>Poales</taxon>
        <taxon>Poaceae</taxon>
        <taxon>BOP clade</taxon>
        <taxon>Oryzoideae</taxon>
        <taxon>Oryzeae</taxon>
        <taxon>Oryzinae</taxon>
        <taxon>Oryza</taxon>
        <taxon>Oryza sativa</taxon>
    </lineage>
</organism>
<protein>
    <recommendedName>
        <fullName>Probable uridine nucleosidase 2</fullName>
        <ecNumber>3.2.2.3</ecNumber>
    </recommendedName>
    <alternativeName>
        <fullName>Uridine ribohydrolase 2</fullName>
    </alternativeName>
</protein>